<dbReference type="EMBL" id="AM946015">
    <property type="protein sequence ID" value="CAR43225.1"/>
    <property type="molecule type" value="Genomic_DNA"/>
</dbReference>
<dbReference type="RefSeq" id="WP_015911812.1">
    <property type="nucleotide sequence ID" value="NC_012004.1"/>
</dbReference>
<dbReference type="SMR" id="B9DVF2"/>
<dbReference type="STRING" id="218495.SUB1503"/>
<dbReference type="GeneID" id="93826821"/>
<dbReference type="KEGG" id="sub:SUB1503"/>
<dbReference type="eggNOG" id="COG0484">
    <property type="taxonomic scope" value="Bacteria"/>
</dbReference>
<dbReference type="HOGENOM" id="CLU_017633_0_7_9"/>
<dbReference type="OrthoDB" id="9779889at2"/>
<dbReference type="Proteomes" id="UP000000449">
    <property type="component" value="Chromosome"/>
</dbReference>
<dbReference type="GO" id="GO:0005737">
    <property type="term" value="C:cytoplasm"/>
    <property type="evidence" value="ECO:0007669"/>
    <property type="project" value="UniProtKB-SubCell"/>
</dbReference>
<dbReference type="GO" id="GO:0005524">
    <property type="term" value="F:ATP binding"/>
    <property type="evidence" value="ECO:0007669"/>
    <property type="project" value="InterPro"/>
</dbReference>
<dbReference type="GO" id="GO:0031072">
    <property type="term" value="F:heat shock protein binding"/>
    <property type="evidence" value="ECO:0007669"/>
    <property type="project" value="InterPro"/>
</dbReference>
<dbReference type="GO" id="GO:0051082">
    <property type="term" value="F:unfolded protein binding"/>
    <property type="evidence" value="ECO:0007669"/>
    <property type="project" value="UniProtKB-UniRule"/>
</dbReference>
<dbReference type="GO" id="GO:0008270">
    <property type="term" value="F:zinc ion binding"/>
    <property type="evidence" value="ECO:0007669"/>
    <property type="project" value="UniProtKB-UniRule"/>
</dbReference>
<dbReference type="GO" id="GO:0051085">
    <property type="term" value="P:chaperone cofactor-dependent protein refolding"/>
    <property type="evidence" value="ECO:0007669"/>
    <property type="project" value="TreeGrafter"/>
</dbReference>
<dbReference type="GO" id="GO:0006260">
    <property type="term" value="P:DNA replication"/>
    <property type="evidence" value="ECO:0007669"/>
    <property type="project" value="UniProtKB-KW"/>
</dbReference>
<dbReference type="GO" id="GO:0042026">
    <property type="term" value="P:protein refolding"/>
    <property type="evidence" value="ECO:0007669"/>
    <property type="project" value="TreeGrafter"/>
</dbReference>
<dbReference type="GO" id="GO:0009408">
    <property type="term" value="P:response to heat"/>
    <property type="evidence" value="ECO:0007669"/>
    <property type="project" value="InterPro"/>
</dbReference>
<dbReference type="CDD" id="cd06257">
    <property type="entry name" value="DnaJ"/>
    <property type="match status" value="1"/>
</dbReference>
<dbReference type="CDD" id="cd10747">
    <property type="entry name" value="DnaJ_C"/>
    <property type="match status" value="1"/>
</dbReference>
<dbReference type="CDD" id="cd10719">
    <property type="entry name" value="DnaJ_zf"/>
    <property type="match status" value="1"/>
</dbReference>
<dbReference type="FunFam" id="1.10.287.110:FF:000031">
    <property type="entry name" value="Molecular chaperone DnaJ"/>
    <property type="match status" value="1"/>
</dbReference>
<dbReference type="FunFam" id="2.10.230.10:FF:000002">
    <property type="entry name" value="Molecular chaperone DnaJ"/>
    <property type="match status" value="1"/>
</dbReference>
<dbReference type="FunFam" id="2.60.260.20:FF:000004">
    <property type="entry name" value="Molecular chaperone DnaJ"/>
    <property type="match status" value="1"/>
</dbReference>
<dbReference type="Gene3D" id="1.10.287.110">
    <property type="entry name" value="DnaJ domain"/>
    <property type="match status" value="1"/>
</dbReference>
<dbReference type="Gene3D" id="2.10.230.10">
    <property type="entry name" value="Heat shock protein DnaJ, cysteine-rich domain"/>
    <property type="match status" value="1"/>
</dbReference>
<dbReference type="Gene3D" id="2.60.260.20">
    <property type="entry name" value="Urease metallochaperone UreE, N-terminal domain"/>
    <property type="match status" value="2"/>
</dbReference>
<dbReference type="HAMAP" id="MF_01152">
    <property type="entry name" value="DnaJ"/>
    <property type="match status" value="1"/>
</dbReference>
<dbReference type="InterPro" id="IPR012724">
    <property type="entry name" value="DnaJ"/>
</dbReference>
<dbReference type="InterPro" id="IPR002939">
    <property type="entry name" value="DnaJ_C"/>
</dbReference>
<dbReference type="InterPro" id="IPR001623">
    <property type="entry name" value="DnaJ_domain"/>
</dbReference>
<dbReference type="InterPro" id="IPR018253">
    <property type="entry name" value="DnaJ_domain_CS"/>
</dbReference>
<dbReference type="InterPro" id="IPR008971">
    <property type="entry name" value="HSP40/DnaJ_pept-bd"/>
</dbReference>
<dbReference type="InterPro" id="IPR001305">
    <property type="entry name" value="HSP_DnaJ_Cys-rich_dom"/>
</dbReference>
<dbReference type="InterPro" id="IPR036410">
    <property type="entry name" value="HSP_DnaJ_Cys-rich_dom_sf"/>
</dbReference>
<dbReference type="InterPro" id="IPR036869">
    <property type="entry name" value="J_dom_sf"/>
</dbReference>
<dbReference type="NCBIfam" id="TIGR02349">
    <property type="entry name" value="DnaJ_bact"/>
    <property type="match status" value="1"/>
</dbReference>
<dbReference type="NCBIfam" id="NF008035">
    <property type="entry name" value="PRK10767.1"/>
    <property type="match status" value="1"/>
</dbReference>
<dbReference type="NCBIfam" id="NF010869">
    <property type="entry name" value="PRK14276.1"/>
    <property type="match status" value="1"/>
</dbReference>
<dbReference type="PANTHER" id="PTHR43096:SF48">
    <property type="entry name" value="CHAPERONE PROTEIN DNAJ"/>
    <property type="match status" value="1"/>
</dbReference>
<dbReference type="PANTHER" id="PTHR43096">
    <property type="entry name" value="DNAJ HOMOLOG 1, MITOCHONDRIAL-RELATED"/>
    <property type="match status" value="1"/>
</dbReference>
<dbReference type="Pfam" id="PF00226">
    <property type="entry name" value="DnaJ"/>
    <property type="match status" value="1"/>
</dbReference>
<dbReference type="Pfam" id="PF01556">
    <property type="entry name" value="DnaJ_C"/>
    <property type="match status" value="1"/>
</dbReference>
<dbReference type="Pfam" id="PF00684">
    <property type="entry name" value="DnaJ_CXXCXGXG"/>
    <property type="match status" value="1"/>
</dbReference>
<dbReference type="PRINTS" id="PR00625">
    <property type="entry name" value="JDOMAIN"/>
</dbReference>
<dbReference type="SMART" id="SM00271">
    <property type="entry name" value="DnaJ"/>
    <property type="match status" value="1"/>
</dbReference>
<dbReference type="SUPFAM" id="SSF46565">
    <property type="entry name" value="Chaperone J-domain"/>
    <property type="match status" value="1"/>
</dbReference>
<dbReference type="SUPFAM" id="SSF57938">
    <property type="entry name" value="DnaJ/Hsp40 cysteine-rich domain"/>
    <property type="match status" value="1"/>
</dbReference>
<dbReference type="SUPFAM" id="SSF49493">
    <property type="entry name" value="HSP40/DnaJ peptide-binding domain"/>
    <property type="match status" value="2"/>
</dbReference>
<dbReference type="PROSITE" id="PS00636">
    <property type="entry name" value="DNAJ_1"/>
    <property type="match status" value="1"/>
</dbReference>
<dbReference type="PROSITE" id="PS50076">
    <property type="entry name" value="DNAJ_2"/>
    <property type="match status" value="1"/>
</dbReference>
<dbReference type="PROSITE" id="PS51188">
    <property type="entry name" value="ZF_CR"/>
    <property type="match status" value="1"/>
</dbReference>
<name>DNAJ_STRU0</name>
<comment type="function">
    <text evidence="1">Participates actively in the response to hyperosmotic and heat shock by preventing the aggregation of stress-denatured proteins and by disaggregating proteins, also in an autonomous, DnaK-independent fashion. Unfolded proteins bind initially to DnaJ; upon interaction with the DnaJ-bound protein, DnaK hydrolyzes its bound ATP, resulting in the formation of a stable complex. GrpE releases ADP from DnaK; ATP binding to DnaK triggers the release of the substrate protein, thus completing the reaction cycle. Several rounds of ATP-dependent interactions between DnaJ, DnaK and GrpE are required for fully efficient folding. Also involved, together with DnaK and GrpE, in the DNA replication of plasmids through activation of initiation proteins.</text>
</comment>
<comment type="cofactor">
    <cofactor evidence="1">
        <name>Zn(2+)</name>
        <dbReference type="ChEBI" id="CHEBI:29105"/>
    </cofactor>
    <text evidence="1">Binds 2 Zn(2+) ions per monomer.</text>
</comment>
<comment type="subunit">
    <text evidence="1">Homodimer.</text>
</comment>
<comment type="subcellular location">
    <subcellularLocation>
        <location evidence="1">Cytoplasm</location>
    </subcellularLocation>
</comment>
<comment type="domain">
    <text evidence="1">The J domain is necessary and sufficient to stimulate DnaK ATPase activity. Zinc center 1 plays an important role in the autonomous, DnaK-independent chaperone activity of DnaJ. Zinc center 2 is essential for interaction with DnaK and for DnaJ activity.</text>
</comment>
<comment type="similarity">
    <text evidence="1">Belongs to the DnaJ family.</text>
</comment>
<proteinExistence type="inferred from homology"/>
<reference key="1">
    <citation type="journal article" date="2009" name="BMC Genomics">
        <title>Evidence for niche adaptation in the genome of the bovine pathogen Streptococcus uberis.</title>
        <authorList>
            <person name="Ward P.N."/>
            <person name="Holden M.T.G."/>
            <person name="Leigh J.A."/>
            <person name="Lennard N."/>
            <person name="Bignell A."/>
            <person name="Barron A."/>
            <person name="Clark L."/>
            <person name="Quail M.A."/>
            <person name="Woodward J."/>
            <person name="Barrell B.G."/>
            <person name="Egan S.A."/>
            <person name="Field T.R."/>
            <person name="Maskell D."/>
            <person name="Kehoe M."/>
            <person name="Dowson C.G."/>
            <person name="Chanter N."/>
            <person name="Whatmore A.M."/>
            <person name="Bentley S.D."/>
            <person name="Parkhill J."/>
        </authorList>
    </citation>
    <scope>NUCLEOTIDE SEQUENCE [LARGE SCALE GENOMIC DNA]</scope>
    <source>
        <strain>ATCC BAA-854 / 0140J</strain>
    </source>
</reference>
<sequence>MNNTEFYDRLGVSKDASQDEIKKAYRKMSKKYHPDINKEPGAEQKYKDVQEAYETLSDAQKRSAYDQYGAAGAQGGFGGGGFGGFDGGGFGGFEDIFSSFFGGGGGMRNPNAPRQGDDLQYRVNLTFEEAIFGVEKDVSYHREATCHTCAGSGAKPGTSPVTCGRCHGSGVINVDTQTPLGMMRRQVTCDVCHGSGKEIKEPCQTCHGTGHEKETHKVSVKIPAGVETGQQIRLQGQGEAGFNGGPYGDLFVVLNVLPSQKFERNGSTIYYNLNISFVQAALGDTVDIPTVHGDVEMAIPAGTQTGKVFRLKGKGAPKLRGAGQGDQHVTVNIVTPTKLNEKQKEALRAFAEASGQEISTPKKKGFFDKMKDALEDI</sequence>
<gene>
    <name evidence="1" type="primary">dnaJ</name>
    <name type="ordered locus">SUB1503</name>
</gene>
<protein>
    <recommendedName>
        <fullName evidence="1">Chaperone protein DnaJ</fullName>
    </recommendedName>
</protein>
<keyword id="KW-0143">Chaperone</keyword>
<keyword id="KW-0963">Cytoplasm</keyword>
<keyword id="KW-0235">DNA replication</keyword>
<keyword id="KW-0479">Metal-binding</keyword>
<keyword id="KW-1185">Reference proteome</keyword>
<keyword id="KW-0677">Repeat</keyword>
<keyword id="KW-0346">Stress response</keyword>
<keyword id="KW-0862">Zinc</keyword>
<keyword id="KW-0863">Zinc-finger</keyword>
<evidence type="ECO:0000255" key="1">
    <source>
        <dbReference type="HAMAP-Rule" id="MF_01152"/>
    </source>
</evidence>
<accession>B9DVF2</accession>
<feature type="chain" id="PRO_1000164280" description="Chaperone protein DnaJ">
    <location>
        <begin position="1"/>
        <end position="377"/>
    </location>
</feature>
<feature type="domain" description="J" evidence="1">
    <location>
        <begin position="5"/>
        <end position="69"/>
    </location>
</feature>
<feature type="repeat" description="CXXCXGXG motif">
    <location>
        <begin position="146"/>
        <end position="153"/>
    </location>
</feature>
<feature type="repeat" description="CXXCXGXG motif">
    <location>
        <begin position="163"/>
        <end position="170"/>
    </location>
</feature>
<feature type="repeat" description="CXXCXGXG motif">
    <location>
        <begin position="189"/>
        <end position="196"/>
    </location>
</feature>
<feature type="repeat" description="CXXCXGXG motif">
    <location>
        <begin position="203"/>
        <end position="210"/>
    </location>
</feature>
<feature type="zinc finger region" description="CR-type" evidence="1">
    <location>
        <begin position="133"/>
        <end position="215"/>
    </location>
</feature>
<feature type="binding site" evidence="1">
    <location>
        <position position="146"/>
    </location>
    <ligand>
        <name>Zn(2+)</name>
        <dbReference type="ChEBI" id="CHEBI:29105"/>
        <label>1</label>
    </ligand>
</feature>
<feature type="binding site" evidence="1">
    <location>
        <position position="149"/>
    </location>
    <ligand>
        <name>Zn(2+)</name>
        <dbReference type="ChEBI" id="CHEBI:29105"/>
        <label>1</label>
    </ligand>
</feature>
<feature type="binding site" evidence="1">
    <location>
        <position position="163"/>
    </location>
    <ligand>
        <name>Zn(2+)</name>
        <dbReference type="ChEBI" id="CHEBI:29105"/>
        <label>2</label>
    </ligand>
</feature>
<feature type="binding site" evidence="1">
    <location>
        <position position="166"/>
    </location>
    <ligand>
        <name>Zn(2+)</name>
        <dbReference type="ChEBI" id="CHEBI:29105"/>
        <label>2</label>
    </ligand>
</feature>
<feature type="binding site" evidence="1">
    <location>
        <position position="189"/>
    </location>
    <ligand>
        <name>Zn(2+)</name>
        <dbReference type="ChEBI" id="CHEBI:29105"/>
        <label>2</label>
    </ligand>
</feature>
<feature type="binding site" evidence="1">
    <location>
        <position position="192"/>
    </location>
    <ligand>
        <name>Zn(2+)</name>
        <dbReference type="ChEBI" id="CHEBI:29105"/>
        <label>2</label>
    </ligand>
</feature>
<feature type="binding site" evidence="1">
    <location>
        <position position="203"/>
    </location>
    <ligand>
        <name>Zn(2+)</name>
        <dbReference type="ChEBI" id="CHEBI:29105"/>
        <label>1</label>
    </ligand>
</feature>
<feature type="binding site" evidence="1">
    <location>
        <position position="206"/>
    </location>
    <ligand>
        <name>Zn(2+)</name>
        <dbReference type="ChEBI" id="CHEBI:29105"/>
        <label>1</label>
    </ligand>
</feature>
<organism>
    <name type="scientific">Streptococcus uberis (strain ATCC BAA-854 / 0140J)</name>
    <dbReference type="NCBI Taxonomy" id="218495"/>
    <lineage>
        <taxon>Bacteria</taxon>
        <taxon>Bacillati</taxon>
        <taxon>Bacillota</taxon>
        <taxon>Bacilli</taxon>
        <taxon>Lactobacillales</taxon>
        <taxon>Streptococcaceae</taxon>
        <taxon>Streptococcus</taxon>
    </lineage>
</organism>